<keyword id="KW-0167">Capsid protein</keyword>
<keyword id="KW-1015">Disulfide bond</keyword>
<keyword id="KW-1048">Host nucleus</keyword>
<keyword id="KW-0945">Host-virus interaction</keyword>
<keyword id="KW-0426">Late protein</keyword>
<keyword id="KW-1185">Reference proteome</keyword>
<keyword id="KW-1145">T=7 icosahedral capsid protein</keyword>
<keyword id="KW-1161">Viral attachment to host cell</keyword>
<keyword id="KW-1162">Viral penetration into host cytoplasm</keyword>
<keyword id="KW-0946">Virion</keyword>
<keyword id="KW-1164">Virus endocytosis by host</keyword>
<keyword id="KW-1160">Virus entry into host cell</keyword>
<protein>
    <recommendedName>
        <fullName evidence="1">Major capsid protein L1</fullName>
    </recommendedName>
</protein>
<comment type="function">
    <text evidence="1">Forms an icosahedral capsid with a T=7 symmetry and a 50 nm diameter. The capsid is composed of 72 pentamers linked to each other by disulfide bonds and associated with L2 proteins. Binds to heparan sulfate proteoglycans on cell surface of basal layer keratinocytes to provide initial virion attachment. This binding mediates a conformational change in the virus capsid that facilitates efficient infection. The virion enters the host cell via endocytosis. During virus trafficking, L1 protein dissociates from the viral DNA and the genomic DNA is released to the host nucleus. The virion assembly takes place within the cell nucleus. Encapsulates the genomic DNA together with protein L2.</text>
</comment>
<comment type="subunit">
    <text evidence="1">Self-assembles into homopentamers. The capsid has an icosahedral symmetry and consists of 72 capsomers, with each capsomer being a pentamer of L1. Interacts with the minor capsid protein L2; this interaction is necessary for viral genome encapsidation. Interacts with protein E2; this interaction enhances E2-dependent replication and transcription activation.</text>
</comment>
<comment type="subcellular location">
    <subcellularLocation>
        <location evidence="1">Virion</location>
    </subcellularLocation>
    <subcellularLocation>
        <location evidence="1">Host nucleus</location>
    </subcellularLocation>
</comment>
<comment type="similarity">
    <text evidence="1">Belongs to the papillomaviridae L1 protein family.</text>
</comment>
<organism>
    <name type="scientific">Human papillomavirus type 32</name>
    <dbReference type="NCBI Taxonomy" id="333763"/>
    <lineage>
        <taxon>Viruses</taxon>
        <taxon>Monodnaviria</taxon>
        <taxon>Shotokuvirae</taxon>
        <taxon>Cossaviricota</taxon>
        <taxon>Papovaviricetes</taxon>
        <taxon>Zurhausenvirales</taxon>
        <taxon>Papillomaviridae</taxon>
        <taxon>Firstpapillomavirinae</taxon>
        <taxon>Alphapapillomavirus</taxon>
        <taxon>Alphapapillomavirus 1</taxon>
    </lineage>
</organism>
<sequence>MSVWRPSDNKVYLPPPPVSKVVSTDEYVQRTNYFYHASSSRLLAVGHPYYTIKKTPNRTSIPKVSGLQYRVFRVRLPDPNKFTLPETNLYNPETQRMVWACVGLEVGRGQPLGVGLSGHPLLNRLDDTENGPRYAAGPGTDNRENVSMDCKQTQLCLVGCKPAIGEHWGKGAACSAQSNGDCPPLELQNSVIQDGDMADVGFGAMDFSALQTSKAEVPLDIMNSISKYPDYLKMSAEAYGDNMFFFLRREQMFVRHLFNRAGTLGEPVPEDMYIKASNGASGRNNLASSIYYPTPSGSMVTSDAQIFNKPYWLQQAQGHNNGICWGNQVFLTVVDTTRSTNMTVCATVTTEDTYKSTNFKEYLRHAEEYDIQFIFQLCKITLSVEVMSYIHTMNPDILDDWNVGVAPPPSGTLEDSYRFVQSQAIRCQAKVTAPEKKDPFSDYSFWEVNLSEKFSSDLDQFPLGRKFLLQAGLRARPKLTAVKRTASSSQKSSSPAKRRKTRK</sequence>
<dbReference type="EMBL" id="X74475">
    <property type="protein sequence ID" value="CAA52554.1"/>
    <property type="molecule type" value="Genomic_DNA"/>
</dbReference>
<dbReference type="EMBL" id="S40236">
    <property type="protein sequence ID" value="AAB22563.1"/>
    <property type="molecule type" value="Genomic_DNA"/>
</dbReference>
<dbReference type="PIR" id="S36514">
    <property type="entry name" value="S36514"/>
</dbReference>
<dbReference type="RefSeq" id="NP_041806.1">
    <property type="nucleotide sequence ID" value="NC_001586.1"/>
</dbReference>
<dbReference type="SMR" id="P36737"/>
<dbReference type="GeneID" id="1489426"/>
<dbReference type="KEGG" id="vg:1489426"/>
<dbReference type="OrthoDB" id="5037at10239"/>
<dbReference type="Proteomes" id="UP000009117">
    <property type="component" value="Genome"/>
</dbReference>
<dbReference type="GO" id="GO:0042025">
    <property type="term" value="C:host cell nucleus"/>
    <property type="evidence" value="ECO:0007669"/>
    <property type="project" value="UniProtKB-SubCell"/>
</dbReference>
<dbReference type="GO" id="GO:0039620">
    <property type="term" value="C:T=7 icosahedral viral capsid"/>
    <property type="evidence" value="ECO:0007669"/>
    <property type="project" value="UniProtKB-UniRule"/>
</dbReference>
<dbReference type="GO" id="GO:0005198">
    <property type="term" value="F:structural molecule activity"/>
    <property type="evidence" value="ECO:0007669"/>
    <property type="project" value="UniProtKB-UniRule"/>
</dbReference>
<dbReference type="GO" id="GO:0075509">
    <property type="term" value="P:endocytosis involved in viral entry into host cell"/>
    <property type="evidence" value="ECO:0007669"/>
    <property type="project" value="UniProtKB-KW"/>
</dbReference>
<dbReference type="GO" id="GO:0019062">
    <property type="term" value="P:virion attachment to host cell"/>
    <property type="evidence" value="ECO:0007669"/>
    <property type="project" value="UniProtKB-UniRule"/>
</dbReference>
<dbReference type="Gene3D" id="2.60.175.20">
    <property type="entry name" value="Major capsid L1 (late) superfamily, Papillomavirus"/>
    <property type="match status" value="2"/>
</dbReference>
<dbReference type="HAMAP" id="MF_04002">
    <property type="entry name" value="PPV_L1"/>
    <property type="match status" value="1"/>
</dbReference>
<dbReference type="InterPro" id="IPR002210">
    <property type="entry name" value="Capsid_L1_Papillomavir"/>
</dbReference>
<dbReference type="InterPro" id="IPR036973">
    <property type="entry name" value="Capsid_L1_sf_Papillomavir"/>
</dbReference>
<dbReference type="InterPro" id="IPR011222">
    <property type="entry name" value="dsDNA_vir_gr_I_capsid"/>
</dbReference>
<dbReference type="Pfam" id="PF00500">
    <property type="entry name" value="Late_protein_L1"/>
    <property type="match status" value="1"/>
</dbReference>
<dbReference type="PRINTS" id="PR00865">
    <property type="entry name" value="HPVCAPSIDL1"/>
</dbReference>
<dbReference type="SUPFAM" id="SSF88648">
    <property type="entry name" value="Group I dsDNA viruses"/>
    <property type="match status" value="1"/>
</dbReference>
<accession>P36737</accession>
<accession>Q90076</accession>
<feature type="chain" id="PRO_0000133516" description="Major capsid protein L1">
    <location>
        <begin position="1"/>
        <end position="503"/>
    </location>
</feature>
<feature type="region of interest" description="Disordered" evidence="2">
    <location>
        <begin position="479"/>
        <end position="503"/>
    </location>
</feature>
<feature type="disulfide bond" description="Interchain (with C-427)" evidence="1">
    <location>
        <position position="174"/>
    </location>
</feature>
<feature type="disulfide bond" description="Interchain (with C-174)" evidence="1">
    <location>
        <position position="427"/>
    </location>
</feature>
<evidence type="ECO:0000255" key="1">
    <source>
        <dbReference type="HAMAP-Rule" id="MF_04002"/>
    </source>
</evidence>
<evidence type="ECO:0000256" key="2">
    <source>
        <dbReference type="SAM" id="MobiDB-lite"/>
    </source>
</evidence>
<name>VL1_HPV32</name>
<organismHost>
    <name type="scientific">Homo sapiens</name>
    <name type="common">Human</name>
    <dbReference type="NCBI Taxonomy" id="9606"/>
</organismHost>
<proteinExistence type="inferred from homology"/>
<reference key="1">
    <citation type="journal article" date="1994" name="Curr. Top. Microbiol. Immunol.">
        <title>Primer-directed sequencing of human papillomavirus types.</title>
        <authorList>
            <person name="Delius H."/>
            <person name="Hofmann B."/>
        </authorList>
    </citation>
    <scope>NUCLEOTIDE SEQUENCE [GENOMIC DNA]</scope>
</reference>
<reference key="2">
    <citation type="journal article" date="1992" name="J. Clin. Microbiol.">
        <title>General primer polymerase chain reaction in combination with sequence analysis for identification of potentially novel human papillomavirus genotypes in cervical lesions.</title>
        <authorList>
            <person name="van den Brule A.J."/>
            <person name="Snijders P.J."/>
            <person name="Raaphorst P.M."/>
            <person name="Schrijnemakers H.F."/>
            <person name="Delius H."/>
            <person name="Gissmann L."/>
            <person name="Meijer C.J."/>
            <person name="Walboomers J.M."/>
        </authorList>
    </citation>
    <scope>NUCLEOTIDE SEQUENCE [GENOMIC DNA] OF 337-368</scope>
</reference>
<gene>
    <name evidence="1" type="primary">L1</name>
</gene>